<protein>
    <recommendedName>
        <fullName evidence="1">Ribosomal RNA small subunit methyltransferase H</fullName>
        <ecNumber evidence="1">2.1.1.199</ecNumber>
    </recommendedName>
    <alternativeName>
        <fullName evidence="1">16S rRNA m(4)C1402 methyltransferase</fullName>
    </alternativeName>
    <alternativeName>
        <fullName evidence="1">rRNA (cytosine-N(4)-)-methyltransferase RsmH</fullName>
    </alternativeName>
</protein>
<organism>
    <name type="scientific">Lactobacillus delbrueckii subsp. bulgaricus (strain ATCC 11842 / DSM 20081 / BCRC 10696 / JCM 1002 / NBRC 13953 / NCIMB 11778 / NCTC 12712 / WDCM 00102 / Lb 14)</name>
    <dbReference type="NCBI Taxonomy" id="390333"/>
    <lineage>
        <taxon>Bacteria</taxon>
        <taxon>Bacillati</taxon>
        <taxon>Bacillota</taxon>
        <taxon>Bacilli</taxon>
        <taxon>Lactobacillales</taxon>
        <taxon>Lactobacillaceae</taxon>
        <taxon>Lactobacillus</taxon>
    </lineage>
</organism>
<proteinExistence type="inferred from homology"/>
<dbReference type="EC" id="2.1.1.199" evidence="1"/>
<dbReference type="EMBL" id="CR954253">
    <property type="protein sequence ID" value="CAI97563.1"/>
    <property type="molecule type" value="Genomic_DNA"/>
</dbReference>
<dbReference type="RefSeq" id="WP_003619159.1">
    <property type="nucleotide sequence ID" value="NZ_JQAV01000001.1"/>
</dbReference>
<dbReference type="SMR" id="Q1GAU0"/>
<dbReference type="STRING" id="390333.Ldb0736"/>
<dbReference type="KEGG" id="ldb:Ldb0736"/>
<dbReference type="PATRIC" id="fig|390333.13.peg.63"/>
<dbReference type="eggNOG" id="COG0275">
    <property type="taxonomic scope" value="Bacteria"/>
</dbReference>
<dbReference type="HOGENOM" id="CLU_038422_2_0_9"/>
<dbReference type="BioCyc" id="LDEL390333:LDB_RS03225-MONOMER"/>
<dbReference type="Proteomes" id="UP000001259">
    <property type="component" value="Chromosome"/>
</dbReference>
<dbReference type="GO" id="GO:0005737">
    <property type="term" value="C:cytoplasm"/>
    <property type="evidence" value="ECO:0007669"/>
    <property type="project" value="UniProtKB-SubCell"/>
</dbReference>
<dbReference type="GO" id="GO:0071424">
    <property type="term" value="F:rRNA (cytosine-N4-)-methyltransferase activity"/>
    <property type="evidence" value="ECO:0007669"/>
    <property type="project" value="UniProtKB-UniRule"/>
</dbReference>
<dbReference type="GO" id="GO:0070475">
    <property type="term" value="P:rRNA base methylation"/>
    <property type="evidence" value="ECO:0007669"/>
    <property type="project" value="UniProtKB-UniRule"/>
</dbReference>
<dbReference type="FunFam" id="1.10.150.170:FF:000001">
    <property type="entry name" value="Ribosomal RNA small subunit methyltransferase H"/>
    <property type="match status" value="1"/>
</dbReference>
<dbReference type="Gene3D" id="1.10.150.170">
    <property type="entry name" value="Putative methyltransferase TM0872, insert domain"/>
    <property type="match status" value="1"/>
</dbReference>
<dbReference type="Gene3D" id="3.40.50.150">
    <property type="entry name" value="Vaccinia Virus protein VP39"/>
    <property type="match status" value="1"/>
</dbReference>
<dbReference type="HAMAP" id="MF_01007">
    <property type="entry name" value="16SrRNA_methyltr_H"/>
    <property type="match status" value="1"/>
</dbReference>
<dbReference type="InterPro" id="IPR002903">
    <property type="entry name" value="RsmH"/>
</dbReference>
<dbReference type="InterPro" id="IPR023397">
    <property type="entry name" value="SAM-dep_MeTrfase_MraW_recog"/>
</dbReference>
<dbReference type="InterPro" id="IPR029063">
    <property type="entry name" value="SAM-dependent_MTases_sf"/>
</dbReference>
<dbReference type="NCBIfam" id="TIGR00006">
    <property type="entry name" value="16S rRNA (cytosine(1402)-N(4))-methyltransferase RsmH"/>
    <property type="match status" value="1"/>
</dbReference>
<dbReference type="PANTHER" id="PTHR11265:SF0">
    <property type="entry name" value="12S RRNA N4-METHYLCYTIDINE METHYLTRANSFERASE"/>
    <property type="match status" value="1"/>
</dbReference>
<dbReference type="PANTHER" id="PTHR11265">
    <property type="entry name" value="S-ADENOSYL-METHYLTRANSFERASE MRAW"/>
    <property type="match status" value="1"/>
</dbReference>
<dbReference type="Pfam" id="PF01795">
    <property type="entry name" value="Methyltransf_5"/>
    <property type="match status" value="1"/>
</dbReference>
<dbReference type="PIRSF" id="PIRSF004486">
    <property type="entry name" value="MraW"/>
    <property type="match status" value="1"/>
</dbReference>
<dbReference type="SUPFAM" id="SSF81799">
    <property type="entry name" value="Putative methyltransferase TM0872, insert domain"/>
    <property type="match status" value="1"/>
</dbReference>
<dbReference type="SUPFAM" id="SSF53335">
    <property type="entry name" value="S-adenosyl-L-methionine-dependent methyltransferases"/>
    <property type="match status" value="1"/>
</dbReference>
<comment type="function">
    <text evidence="1">Specifically methylates the N4 position of cytidine in position 1402 (C1402) of 16S rRNA.</text>
</comment>
<comment type="catalytic activity">
    <reaction evidence="1">
        <text>cytidine(1402) in 16S rRNA + S-adenosyl-L-methionine = N(4)-methylcytidine(1402) in 16S rRNA + S-adenosyl-L-homocysteine + H(+)</text>
        <dbReference type="Rhea" id="RHEA:42928"/>
        <dbReference type="Rhea" id="RHEA-COMP:10286"/>
        <dbReference type="Rhea" id="RHEA-COMP:10287"/>
        <dbReference type="ChEBI" id="CHEBI:15378"/>
        <dbReference type="ChEBI" id="CHEBI:57856"/>
        <dbReference type="ChEBI" id="CHEBI:59789"/>
        <dbReference type="ChEBI" id="CHEBI:74506"/>
        <dbReference type="ChEBI" id="CHEBI:82748"/>
        <dbReference type="EC" id="2.1.1.199"/>
    </reaction>
</comment>
<comment type="subcellular location">
    <subcellularLocation>
        <location evidence="1">Cytoplasm</location>
    </subcellularLocation>
</comment>
<comment type="similarity">
    <text evidence="1">Belongs to the methyltransferase superfamily. RsmH family.</text>
</comment>
<accession>Q1GAU0</accession>
<gene>
    <name evidence="1" type="primary">rsmH</name>
    <name type="synonym">mraW</name>
    <name type="ordered locus">Ldb0736</name>
</gene>
<name>RSMH_LACDA</name>
<evidence type="ECO:0000255" key="1">
    <source>
        <dbReference type="HAMAP-Rule" id="MF_01007"/>
    </source>
</evidence>
<reference key="1">
    <citation type="journal article" date="2006" name="Proc. Natl. Acad. Sci. U.S.A.">
        <title>The complete genome sequence of Lactobacillus bulgaricus reveals extensive and ongoing reductive evolution.</title>
        <authorList>
            <person name="van de Guchte M."/>
            <person name="Penaud S."/>
            <person name="Grimaldi C."/>
            <person name="Barbe V."/>
            <person name="Bryson K."/>
            <person name="Nicolas P."/>
            <person name="Robert C."/>
            <person name="Oztas S."/>
            <person name="Mangenot S."/>
            <person name="Couloux A."/>
            <person name="Loux V."/>
            <person name="Dervyn R."/>
            <person name="Bossy R."/>
            <person name="Bolotin A."/>
            <person name="Batto J.-M."/>
            <person name="Walunas T."/>
            <person name="Gibrat J.-F."/>
            <person name="Bessieres P."/>
            <person name="Weissenbach J."/>
            <person name="Ehrlich S.D."/>
            <person name="Maguin E."/>
        </authorList>
    </citation>
    <scope>NUCLEOTIDE SEQUENCE [LARGE SCALE GENOMIC DNA]</scope>
    <source>
        <strain>ATCC 11842 / DSM 20081 / BCRC 10696 / JCM 1002 / NBRC 13953 / NCIMB 11778 / NCTC 12712 / WDCM 00102 / Lb 14</strain>
    </source>
</reference>
<sequence length="314" mass="35566">MEFKHTSVLLHETIDNLAPQSGGTYVDATFGGGGHARYLLRKLDKGNLIGFDQDQYAIDTAQSNFAAFLKEDSQPRLQLVHNNFSHLKEELAKLGISGIDGIYYDLGVSSPQLDQAERGFSYRFDARLDMRMDQSQDFDAYQLVNQYDQKQLADVLYRYGDEKFSRQIARKIVERRRGKPIETTFELVEIIKEAIPAAARRRGGHPAKKSFQAIRVEVNHELDVLRASLEEAISLLNPGGRISVITFQSLEDKIVKQTFKKYSEVEIPRGMPVVPEGIKPTLRLVNRKSITASEEELAENNRSHSAKLRVAEKL</sequence>
<feature type="chain" id="PRO_0000386942" description="Ribosomal RNA small subunit methyltransferase H">
    <location>
        <begin position="1"/>
        <end position="314"/>
    </location>
</feature>
<feature type="binding site" evidence="1">
    <location>
        <begin position="33"/>
        <end position="35"/>
    </location>
    <ligand>
        <name>S-adenosyl-L-methionine</name>
        <dbReference type="ChEBI" id="CHEBI:59789"/>
    </ligand>
</feature>
<feature type="binding site" evidence="1">
    <location>
        <position position="52"/>
    </location>
    <ligand>
        <name>S-adenosyl-L-methionine</name>
        <dbReference type="ChEBI" id="CHEBI:59789"/>
    </ligand>
</feature>
<feature type="binding site" evidence="1">
    <location>
        <position position="84"/>
    </location>
    <ligand>
        <name>S-adenosyl-L-methionine</name>
        <dbReference type="ChEBI" id="CHEBI:59789"/>
    </ligand>
</feature>
<feature type="binding site" evidence="1">
    <location>
        <position position="105"/>
    </location>
    <ligand>
        <name>S-adenosyl-L-methionine</name>
        <dbReference type="ChEBI" id="CHEBI:59789"/>
    </ligand>
</feature>
<feature type="binding site" evidence="1">
    <location>
        <position position="112"/>
    </location>
    <ligand>
        <name>S-adenosyl-L-methionine</name>
        <dbReference type="ChEBI" id="CHEBI:59789"/>
    </ligand>
</feature>
<keyword id="KW-0963">Cytoplasm</keyword>
<keyword id="KW-0489">Methyltransferase</keyword>
<keyword id="KW-1185">Reference proteome</keyword>
<keyword id="KW-0698">rRNA processing</keyword>
<keyword id="KW-0949">S-adenosyl-L-methionine</keyword>
<keyword id="KW-0808">Transferase</keyword>